<evidence type="ECO:0000250" key="1"/>
<evidence type="ECO:0000305" key="2"/>
<evidence type="ECO:0000312" key="3">
    <source>
        <dbReference type="WormBase" id="CBG00973a"/>
    </source>
</evidence>
<organism>
    <name type="scientific">Caenorhabditis briggsae</name>
    <dbReference type="NCBI Taxonomy" id="6238"/>
    <lineage>
        <taxon>Eukaryota</taxon>
        <taxon>Metazoa</taxon>
        <taxon>Ecdysozoa</taxon>
        <taxon>Nematoda</taxon>
        <taxon>Chromadorea</taxon>
        <taxon>Rhabditida</taxon>
        <taxon>Rhabditina</taxon>
        <taxon>Rhabditomorpha</taxon>
        <taxon>Rhabditoidea</taxon>
        <taxon>Rhabditidae</taxon>
        <taxon>Peloderinae</taxon>
        <taxon>Caenorhabditis</taxon>
    </lineage>
</organism>
<feature type="chain" id="PRO_0000302742" description="Probable FAD synthase">
    <location>
        <begin position="1"/>
        <end position="523"/>
    </location>
</feature>
<feature type="region of interest" description="Molybdenum cofactor biosynthesis protein-like">
    <location>
        <begin position="20"/>
        <end position="111"/>
    </location>
</feature>
<feature type="region of interest" description="FAD synthase">
    <location>
        <begin position="332"/>
        <end position="489"/>
    </location>
</feature>
<gene>
    <name evidence="3" type="primary">flad-1</name>
    <name evidence="3" type="ORF">CBG00973</name>
</gene>
<comment type="function">
    <text evidence="1">Catalyzes the adenylation of flavin mononucleotide (FMN) to form flavin adenine dinucleotide (FAD) coenzyme.</text>
</comment>
<comment type="catalytic activity">
    <reaction>
        <text>FMN + ATP + H(+) = FAD + diphosphate</text>
        <dbReference type="Rhea" id="RHEA:17237"/>
        <dbReference type="ChEBI" id="CHEBI:15378"/>
        <dbReference type="ChEBI" id="CHEBI:30616"/>
        <dbReference type="ChEBI" id="CHEBI:33019"/>
        <dbReference type="ChEBI" id="CHEBI:57692"/>
        <dbReference type="ChEBI" id="CHEBI:58210"/>
        <dbReference type="EC" id="2.7.7.2"/>
    </reaction>
</comment>
<comment type="cofactor">
    <cofactor evidence="1">
        <name>Mg(2+)</name>
        <dbReference type="ChEBI" id="CHEBI:18420"/>
    </cofactor>
</comment>
<comment type="pathway">
    <text>Cofactor biosynthesis; FAD biosynthesis; FAD from FMN: step 1/1.</text>
</comment>
<comment type="domain">
    <text>The molybdenum cofactor biosynthesis protein-like region may not be functional.</text>
</comment>
<comment type="similarity">
    <text evidence="2">In the N-terminal section; belongs to the MoaB/Mog family.</text>
</comment>
<comment type="similarity">
    <text evidence="2">In the C-terminal section; belongs to the PAPS reductase family. FAD1 subfamily.</text>
</comment>
<reference key="1">
    <citation type="journal article" date="2003" name="PLoS Biol.">
        <title>The genome sequence of Caenorhabditis briggsae: a platform for comparative genomics.</title>
        <authorList>
            <person name="Stein L.D."/>
            <person name="Bao Z."/>
            <person name="Blasiar D."/>
            <person name="Blumenthal T."/>
            <person name="Brent M.R."/>
            <person name="Chen N."/>
            <person name="Chinwalla A."/>
            <person name="Clarke L."/>
            <person name="Clee C."/>
            <person name="Coghlan A."/>
            <person name="Coulson A."/>
            <person name="D'Eustachio P."/>
            <person name="Fitch D.H.A."/>
            <person name="Fulton L.A."/>
            <person name="Fulton R.E."/>
            <person name="Griffiths-Jones S."/>
            <person name="Harris T.W."/>
            <person name="Hillier L.W."/>
            <person name="Kamath R."/>
            <person name="Kuwabara P.E."/>
            <person name="Mardis E.R."/>
            <person name="Marra M.A."/>
            <person name="Miner T.L."/>
            <person name="Minx P."/>
            <person name="Mullikin J.C."/>
            <person name="Plumb R.W."/>
            <person name="Rogers J."/>
            <person name="Schein J.E."/>
            <person name="Sohrmann M."/>
            <person name="Spieth J."/>
            <person name="Stajich J.E."/>
            <person name="Wei C."/>
            <person name="Willey D."/>
            <person name="Wilson R.K."/>
            <person name="Durbin R.M."/>
            <person name="Waterston R.H."/>
        </authorList>
    </citation>
    <scope>NUCLEOTIDE SEQUENCE [LARGE SCALE GENOMIC DNA]</scope>
    <source>
        <strain>AF16</strain>
    </source>
</reference>
<keyword id="KW-0067">ATP-binding</keyword>
<keyword id="KW-0274">FAD</keyword>
<keyword id="KW-0285">Flavoprotein</keyword>
<keyword id="KW-0288">FMN</keyword>
<keyword id="KW-0547">Nucleotide-binding</keyword>
<keyword id="KW-0548">Nucleotidyltransferase</keyword>
<keyword id="KW-1185">Reference proteome</keyword>
<keyword id="KW-0808">Transferase</keyword>
<accession>Q626I0</accession>
<accession>A8WP73</accession>
<protein>
    <recommendedName>
        <fullName>Probable FAD synthase</fullName>
        <ecNumber>2.7.7.2</ecNumber>
    </recommendedName>
    <alternativeName>
        <fullName>FAD pyrophosphorylase</fullName>
    </alternativeName>
    <alternativeName>
        <fullName>FMN adenylyltransferase</fullName>
    </alternativeName>
    <alternativeName>
        <fullName>Flavin adenine dinucleotide synthase</fullName>
    </alternativeName>
    <domain>
        <recommendedName>
            <fullName>Molybdenum cofactor biosynthesis protein-like region</fullName>
        </recommendedName>
    </domain>
    <domain>
        <recommendedName>
            <fullName>FAD synthase region</fullName>
        </recommendedName>
    </domain>
</protein>
<name>FAD1_CAEBR</name>
<dbReference type="EC" id="2.7.7.2"/>
<dbReference type="EMBL" id="HE600951">
    <property type="protein sequence ID" value="CAP22279.1"/>
    <property type="molecule type" value="Genomic_DNA"/>
</dbReference>
<dbReference type="RefSeq" id="XP_002629740.1">
    <property type="nucleotide sequence ID" value="XM_002629694.1"/>
</dbReference>
<dbReference type="SMR" id="Q626I0"/>
<dbReference type="FunCoup" id="Q626I0">
    <property type="interactions" value="1358"/>
</dbReference>
<dbReference type="STRING" id="6238.Q626I0"/>
<dbReference type="EnsemblMetazoa" id="CBG00973a.1">
    <property type="protein sequence ID" value="CBG00973a.1"/>
    <property type="gene ID" value="WBGene00024275"/>
</dbReference>
<dbReference type="GeneID" id="8573234"/>
<dbReference type="KEGG" id="cbr:CBG_00973"/>
<dbReference type="CTD" id="8573234"/>
<dbReference type="WormBase" id="CBG00973a">
    <property type="protein sequence ID" value="CBP00276"/>
    <property type="gene ID" value="WBGene00024275"/>
    <property type="gene designation" value="Cbr-flad-1"/>
</dbReference>
<dbReference type="eggNOG" id="KOG2644">
    <property type="taxonomic scope" value="Eukaryota"/>
</dbReference>
<dbReference type="HOGENOM" id="CLU_030805_8_0_1"/>
<dbReference type="InParanoid" id="Q626I0"/>
<dbReference type="OMA" id="NSHFLCK"/>
<dbReference type="UniPathway" id="UPA00277">
    <property type="reaction ID" value="UER00407"/>
</dbReference>
<dbReference type="Proteomes" id="UP000008549">
    <property type="component" value="Unassembled WGS sequence"/>
</dbReference>
<dbReference type="GO" id="GO:0005524">
    <property type="term" value="F:ATP binding"/>
    <property type="evidence" value="ECO:0007669"/>
    <property type="project" value="UniProtKB-KW"/>
</dbReference>
<dbReference type="GO" id="GO:0003919">
    <property type="term" value="F:FMN adenylyltransferase activity"/>
    <property type="evidence" value="ECO:0000318"/>
    <property type="project" value="GO_Central"/>
</dbReference>
<dbReference type="GO" id="GO:0006747">
    <property type="term" value="P:FAD biosynthetic process"/>
    <property type="evidence" value="ECO:0000318"/>
    <property type="project" value="GO_Central"/>
</dbReference>
<dbReference type="CDD" id="cd00885">
    <property type="entry name" value="cinA"/>
    <property type="match status" value="1"/>
</dbReference>
<dbReference type="CDD" id="cd23948">
    <property type="entry name" value="FAD_synthase"/>
    <property type="match status" value="1"/>
</dbReference>
<dbReference type="FunFam" id="3.40.50.620:FF:000445">
    <property type="entry name" value="Probable FAD synthase"/>
    <property type="match status" value="1"/>
</dbReference>
<dbReference type="FunFam" id="3.40.980.10:FF:000024">
    <property type="entry name" value="Probable FAD synthase"/>
    <property type="match status" value="1"/>
</dbReference>
<dbReference type="Gene3D" id="3.40.50.620">
    <property type="entry name" value="HUPs"/>
    <property type="match status" value="1"/>
</dbReference>
<dbReference type="Gene3D" id="3.40.980.10">
    <property type="entry name" value="MoaB/Mog-like domain"/>
    <property type="match status" value="1"/>
</dbReference>
<dbReference type="InterPro" id="IPR012183">
    <property type="entry name" value="FAD_synth_MoaB/Mog-bd"/>
</dbReference>
<dbReference type="InterPro" id="IPR056596">
    <property type="entry name" value="FLAD1_M"/>
</dbReference>
<dbReference type="InterPro" id="IPR036425">
    <property type="entry name" value="MoaB/Mog-like_dom_sf"/>
</dbReference>
<dbReference type="InterPro" id="IPR001453">
    <property type="entry name" value="MoaB/Mog_dom"/>
</dbReference>
<dbReference type="InterPro" id="IPR002500">
    <property type="entry name" value="PAPS_reduct_dom"/>
</dbReference>
<dbReference type="InterPro" id="IPR014729">
    <property type="entry name" value="Rossmann-like_a/b/a_fold"/>
</dbReference>
<dbReference type="PANTHER" id="PTHR23293:SF9">
    <property type="entry name" value="FAD SYNTHASE"/>
    <property type="match status" value="1"/>
</dbReference>
<dbReference type="PANTHER" id="PTHR23293">
    <property type="entry name" value="FAD SYNTHETASE-RELATED FMN ADENYLYLTRANSFERASE"/>
    <property type="match status" value="1"/>
</dbReference>
<dbReference type="Pfam" id="PF24102">
    <property type="entry name" value="FLAD1_M"/>
    <property type="match status" value="1"/>
</dbReference>
<dbReference type="Pfam" id="PF00994">
    <property type="entry name" value="MoCF_biosynth"/>
    <property type="match status" value="1"/>
</dbReference>
<dbReference type="Pfam" id="PF01507">
    <property type="entry name" value="PAPS_reduct"/>
    <property type="match status" value="2"/>
</dbReference>
<dbReference type="PIRSF" id="PIRSF036620">
    <property type="entry name" value="MPTbdFAD"/>
    <property type="match status" value="1"/>
</dbReference>
<dbReference type="SMART" id="SM00852">
    <property type="entry name" value="MoCF_biosynth"/>
    <property type="match status" value="1"/>
</dbReference>
<dbReference type="SUPFAM" id="SSF52402">
    <property type="entry name" value="Adenine nucleotide alpha hydrolases-like"/>
    <property type="match status" value="1"/>
</dbReference>
<dbReference type="SUPFAM" id="SSF53218">
    <property type="entry name" value="Molybdenum cofactor biosynthesis proteins"/>
    <property type="match status" value="1"/>
</dbReference>
<sequence>MRAIFRATKRMPPGQRKTAAIVVIGDEILKGTTRDTNSHFLCKRLHKLGVNIKKIAVVGDEISEISREVQSASSAYDYVITSGGVGPTHDDKTYLGLAHAFTDQLHFSDEIRQAVNRFLPTYIDKKKSEGVEEGIEEVVRVVTEKLCTIPKMSQLLWGTQKVDGRVSTFPVVRVANVVALPGVPKFCERAFDELQDQLFPVEERQSMFFDTIYTDLDEFDFSRRLADVAARFEEQNVQIGSYPELKNKFFKTKLTIETESSESMEAVRIALKELLVGHIVYYDSHAWTDTVAKWRAFKKRELVEAKNVDFVRKLEEAEKIVEDIVERYPLDQIALSFNGGKDCTVLLHLLRLKVDEKYGASKAIQGFHIMVEDQFPEATQFIIDAAQFYNIQVLEFPGPLKIGLAGLKKQRPSIIPVLMGSRATDPNGKYMKTPVEWTDSDWPKVLRVCPILNWTYSDVWHMLRGLCVPYCKLYDQGYTSLGGRDNTVKHPALRIVASDGKEHYLPAYKLHNDAEERSNRSNL</sequence>
<proteinExistence type="inferred from homology"/>